<reference key="1">
    <citation type="submission" date="2007-08" db="EMBL/GenBank/DDBJ databases">
        <authorList>
            <consortium name="The Citrobacter koseri Genome Sequencing Project"/>
            <person name="McClelland M."/>
            <person name="Sanderson E.K."/>
            <person name="Porwollik S."/>
            <person name="Spieth J."/>
            <person name="Clifton W.S."/>
            <person name="Latreille P."/>
            <person name="Courtney L."/>
            <person name="Wang C."/>
            <person name="Pepin K."/>
            <person name="Bhonagiri V."/>
            <person name="Nash W."/>
            <person name="Johnson M."/>
            <person name="Thiruvilangam P."/>
            <person name="Wilson R."/>
        </authorList>
    </citation>
    <scope>NUCLEOTIDE SEQUENCE [LARGE SCALE GENOMIC DNA]</scope>
    <source>
        <strain>ATCC BAA-895 / CDC 4225-83 / SGSC4696</strain>
    </source>
</reference>
<protein>
    <recommendedName>
        <fullName evidence="1">Peptide chain release factor 3</fullName>
        <shortName evidence="1">RF-3</shortName>
    </recommendedName>
</protein>
<feature type="chain" id="PRO_1000023641" description="Peptide chain release factor 3">
    <location>
        <begin position="1"/>
        <end position="529"/>
    </location>
</feature>
<feature type="domain" description="tr-type G">
    <location>
        <begin position="11"/>
        <end position="280"/>
    </location>
</feature>
<feature type="binding site" evidence="1">
    <location>
        <begin position="20"/>
        <end position="27"/>
    </location>
    <ligand>
        <name>GTP</name>
        <dbReference type="ChEBI" id="CHEBI:37565"/>
    </ligand>
</feature>
<feature type="binding site" evidence="1">
    <location>
        <begin position="88"/>
        <end position="92"/>
    </location>
    <ligand>
        <name>GTP</name>
        <dbReference type="ChEBI" id="CHEBI:37565"/>
    </ligand>
</feature>
<feature type="binding site" evidence="1">
    <location>
        <begin position="142"/>
        <end position="145"/>
    </location>
    <ligand>
        <name>GTP</name>
        <dbReference type="ChEBI" id="CHEBI:37565"/>
    </ligand>
</feature>
<comment type="function">
    <text evidence="1">Increases the formation of ribosomal termination complexes and stimulates activities of RF-1 and RF-2. It binds guanine nucleotides and has strong preference for UGA stop codons. It may interact directly with the ribosome. The stimulation of RF-1 and RF-2 is significantly reduced by GTP and GDP, but not by GMP.</text>
</comment>
<comment type="subcellular location">
    <subcellularLocation>
        <location evidence="1">Cytoplasm</location>
    </subcellularLocation>
</comment>
<comment type="similarity">
    <text evidence="1">Belongs to the TRAFAC class translation factor GTPase superfamily. Classic translation factor GTPase family. PrfC subfamily.</text>
</comment>
<evidence type="ECO:0000255" key="1">
    <source>
        <dbReference type="HAMAP-Rule" id="MF_00072"/>
    </source>
</evidence>
<accession>A8ALY7</accession>
<organism>
    <name type="scientific">Citrobacter koseri (strain ATCC BAA-895 / CDC 4225-83 / SGSC4696)</name>
    <dbReference type="NCBI Taxonomy" id="290338"/>
    <lineage>
        <taxon>Bacteria</taxon>
        <taxon>Pseudomonadati</taxon>
        <taxon>Pseudomonadota</taxon>
        <taxon>Gammaproteobacteria</taxon>
        <taxon>Enterobacterales</taxon>
        <taxon>Enterobacteriaceae</taxon>
        <taxon>Citrobacter</taxon>
    </lineage>
</organism>
<sequence>MTLSPYLQEVAKRRTFAIISHPDAGKTTITEKVLLFGQAIQTAGTVKGRGSSQHAKSDWMEMEKQRGISITTSVMQFPYHDCLVNLLDTPGHEDFSEDTYRTLTAVDCCLMVIDAAKGVEDRTRKLMEVTRLRDTPILTFMNKLDRDIRDPMELLDEVENELKIGCAPITWPIGCGKLFKGVYHLYKDETYLYQTGKGHTIQEVRIVKGLDNPELDAAVGEDLAQQLRDELELVQGASNEFDHELFLAGEITPVFFGTALGNFGVDHMLDGLVEWAPAPMPRQTDTRTVEAKEEKFTGFVFKIQANMDPKHRDRVAFMRVVSGKYEKGMKMRQVRIGKDVVISDALTFMAGDRSHVEEAYPGDILGLHNHGTIQIGDTFTQGEMMKFTGIPNFAPELFRRIRLKDPLKQKQLLKGLVQLSEEGAVQVFRPIANNDLIVGAVGVLQFDVVVARLKSEYNVEAIYESVNVATARWVECTDAKKFEEFKRKNEVQLALDGGDNLTYIAPTMVNLNLTQERYPDVQFRKTREH</sequence>
<keyword id="KW-0963">Cytoplasm</keyword>
<keyword id="KW-0342">GTP-binding</keyword>
<keyword id="KW-0547">Nucleotide-binding</keyword>
<keyword id="KW-0648">Protein biosynthesis</keyword>
<keyword id="KW-1185">Reference proteome</keyword>
<name>RF3_CITK8</name>
<proteinExistence type="inferred from homology"/>
<dbReference type="EMBL" id="CP000822">
    <property type="protein sequence ID" value="ABV14500.1"/>
    <property type="molecule type" value="Genomic_DNA"/>
</dbReference>
<dbReference type="RefSeq" id="WP_012134201.1">
    <property type="nucleotide sequence ID" value="NC_009792.1"/>
</dbReference>
<dbReference type="SMR" id="A8ALY7"/>
<dbReference type="STRING" id="290338.CKO_03417"/>
<dbReference type="GeneID" id="45137172"/>
<dbReference type="KEGG" id="cko:CKO_03417"/>
<dbReference type="HOGENOM" id="CLU_002794_2_1_6"/>
<dbReference type="OrthoDB" id="9801472at2"/>
<dbReference type="Proteomes" id="UP000008148">
    <property type="component" value="Chromosome"/>
</dbReference>
<dbReference type="GO" id="GO:0005829">
    <property type="term" value="C:cytosol"/>
    <property type="evidence" value="ECO:0007669"/>
    <property type="project" value="TreeGrafter"/>
</dbReference>
<dbReference type="GO" id="GO:0005525">
    <property type="term" value="F:GTP binding"/>
    <property type="evidence" value="ECO:0007669"/>
    <property type="project" value="UniProtKB-UniRule"/>
</dbReference>
<dbReference type="GO" id="GO:0003924">
    <property type="term" value="F:GTPase activity"/>
    <property type="evidence" value="ECO:0007669"/>
    <property type="project" value="InterPro"/>
</dbReference>
<dbReference type="GO" id="GO:0097216">
    <property type="term" value="F:guanosine tetraphosphate binding"/>
    <property type="evidence" value="ECO:0007669"/>
    <property type="project" value="UniProtKB-ARBA"/>
</dbReference>
<dbReference type="GO" id="GO:0016150">
    <property type="term" value="F:translation release factor activity, codon nonspecific"/>
    <property type="evidence" value="ECO:0007669"/>
    <property type="project" value="TreeGrafter"/>
</dbReference>
<dbReference type="GO" id="GO:0016149">
    <property type="term" value="F:translation release factor activity, codon specific"/>
    <property type="evidence" value="ECO:0007669"/>
    <property type="project" value="UniProtKB-UniRule"/>
</dbReference>
<dbReference type="GO" id="GO:0006449">
    <property type="term" value="P:regulation of translational termination"/>
    <property type="evidence" value="ECO:0007669"/>
    <property type="project" value="UniProtKB-UniRule"/>
</dbReference>
<dbReference type="CDD" id="cd04169">
    <property type="entry name" value="RF3"/>
    <property type="match status" value="1"/>
</dbReference>
<dbReference type="CDD" id="cd03689">
    <property type="entry name" value="RF3_II"/>
    <property type="match status" value="1"/>
</dbReference>
<dbReference type="CDD" id="cd16259">
    <property type="entry name" value="RF3_III"/>
    <property type="match status" value="1"/>
</dbReference>
<dbReference type="FunFam" id="2.40.30.10:FF:000040">
    <property type="entry name" value="Peptide chain release factor 3"/>
    <property type="match status" value="1"/>
</dbReference>
<dbReference type="FunFam" id="3.30.70.3280:FF:000001">
    <property type="entry name" value="Peptide chain release factor 3"/>
    <property type="match status" value="1"/>
</dbReference>
<dbReference type="FunFam" id="3.40.50.300:FF:000184">
    <property type="entry name" value="Peptide chain release factor 3"/>
    <property type="match status" value="1"/>
</dbReference>
<dbReference type="FunFam" id="3.40.50.300:FF:000253">
    <property type="entry name" value="Peptide chain release factor 3"/>
    <property type="match status" value="1"/>
</dbReference>
<dbReference type="Gene3D" id="3.40.50.300">
    <property type="entry name" value="P-loop containing nucleotide triphosphate hydrolases"/>
    <property type="match status" value="3"/>
</dbReference>
<dbReference type="Gene3D" id="3.30.70.3280">
    <property type="entry name" value="Peptide chain release factor 3, domain III"/>
    <property type="match status" value="1"/>
</dbReference>
<dbReference type="HAMAP" id="MF_00072">
    <property type="entry name" value="Rel_fac_3"/>
    <property type="match status" value="1"/>
</dbReference>
<dbReference type="InterPro" id="IPR053905">
    <property type="entry name" value="EF-G-like_DII"/>
</dbReference>
<dbReference type="InterPro" id="IPR035647">
    <property type="entry name" value="EFG_III/V"/>
</dbReference>
<dbReference type="InterPro" id="IPR031157">
    <property type="entry name" value="G_TR_CS"/>
</dbReference>
<dbReference type="InterPro" id="IPR027417">
    <property type="entry name" value="P-loop_NTPase"/>
</dbReference>
<dbReference type="InterPro" id="IPR004548">
    <property type="entry name" value="PrfC"/>
</dbReference>
<dbReference type="InterPro" id="IPR032090">
    <property type="entry name" value="RF3_C"/>
</dbReference>
<dbReference type="InterPro" id="IPR038467">
    <property type="entry name" value="RF3_dom_3_sf"/>
</dbReference>
<dbReference type="InterPro" id="IPR041732">
    <property type="entry name" value="RF3_GTP-bd"/>
</dbReference>
<dbReference type="InterPro" id="IPR005225">
    <property type="entry name" value="Small_GTP-bd"/>
</dbReference>
<dbReference type="InterPro" id="IPR000795">
    <property type="entry name" value="T_Tr_GTP-bd_dom"/>
</dbReference>
<dbReference type="InterPro" id="IPR009000">
    <property type="entry name" value="Transl_B-barrel_sf"/>
</dbReference>
<dbReference type="NCBIfam" id="TIGR00503">
    <property type="entry name" value="prfC"/>
    <property type="match status" value="1"/>
</dbReference>
<dbReference type="NCBIfam" id="NF001964">
    <property type="entry name" value="PRK00741.1"/>
    <property type="match status" value="1"/>
</dbReference>
<dbReference type="NCBIfam" id="TIGR00231">
    <property type="entry name" value="small_GTP"/>
    <property type="match status" value="1"/>
</dbReference>
<dbReference type="PANTHER" id="PTHR43556">
    <property type="entry name" value="PEPTIDE CHAIN RELEASE FACTOR RF3"/>
    <property type="match status" value="1"/>
</dbReference>
<dbReference type="PANTHER" id="PTHR43556:SF2">
    <property type="entry name" value="PEPTIDE CHAIN RELEASE FACTOR RF3"/>
    <property type="match status" value="1"/>
</dbReference>
<dbReference type="Pfam" id="PF22042">
    <property type="entry name" value="EF-G_D2"/>
    <property type="match status" value="1"/>
</dbReference>
<dbReference type="Pfam" id="PF00009">
    <property type="entry name" value="GTP_EFTU"/>
    <property type="match status" value="1"/>
</dbReference>
<dbReference type="Pfam" id="PF16658">
    <property type="entry name" value="RF3_C"/>
    <property type="match status" value="1"/>
</dbReference>
<dbReference type="PRINTS" id="PR00315">
    <property type="entry name" value="ELONGATNFCT"/>
</dbReference>
<dbReference type="SUPFAM" id="SSF54980">
    <property type="entry name" value="EF-G C-terminal domain-like"/>
    <property type="match status" value="1"/>
</dbReference>
<dbReference type="SUPFAM" id="SSF52540">
    <property type="entry name" value="P-loop containing nucleoside triphosphate hydrolases"/>
    <property type="match status" value="1"/>
</dbReference>
<dbReference type="SUPFAM" id="SSF50447">
    <property type="entry name" value="Translation proteins"/>
    <property type="match status" value="1"/>
</dbReference>
<dbReference type="PROSITE" id="PS00301">
    <property type="entry name" value="G_TR_1"/>
    <property type="match status" value="1"/>
</dbReference>
<dbReference type="PROSITE" id="PS51722">
    <property type="entry name" value="G_TR_2"/>
    <property type="match status" value="1"/>
</dbReference>
<gene>
    <name evidence="1" type="primary">prfC</name>
    <name type="ordered locus">CKO_03417</name>
</gene>